<reference key="1">
    <citation type="journal article" date="1995" name="Mol. Biochem. Parasitol.">
        <title>cDNA expressed sequence tags of Trypanosoma brucei rhodesiense provide new insights into the biology of the parasite.</title>
        <authorList>
            <person name="El-Sayed N.M.A."/>
            <person name="Alarcon C.M."/>
            <person name="Beck J.C."/>
            <person name="Sheffield V.C."/>
            <person name="Donelson J.E."/>
        </authorList>
    </citation>
    <scope>NUCLEOTIDE SEQUENCE [MRNA]</scope>
    <source>
        <strain>WRATat 1.14</strain>
    </source>
</reference>
<evidence type="ECO:0000250" key="1">
    <source>
        <dbReference type="UniProtKB" id="Q06830"/>
    </source>
</evidence>
<evidence type="ECO:0000255" key="2">
    <source>
        <dbReference type="PROSITE-ProRule" id="PRU00691"/>
    </source>
</evidence>
<evidence type="ECO:0000256" key="3">
    <source>
        <dbReference type="SAM" id="MobiDB-lite"/>
    </source>
</evidence>
<evidence type="ECO:0000305" key="4"/>
<protein>
    <recommendedName>
        <fullName>Thioredoxin peroxidase</fullName>
        <ecNumber evidence="1">1.11.1.24</ecNumber>
    </recommendedName>
    <alternativeName>
        <fullName>Peroxiredoxin</fullName>
    </alternativeName>
    <alternativeName>
        <fullName>Thiol-specific antioxidant protein</fullName>
    </alternativeName>
    <alternativeName>
        <fullName>Thioredoxin-dependent peroxide reductase</fullName>
    </alternativeName>
    <alternativeName>
        <fullName evidence="4">Thioredoxin-dependent peroxiredoxin</fullName>
    </alternativeName>
</protein>
<proteinExistence type="evidence at transcript level"/>
<dbReference type="EC" id="1.11.1.24" evidence="1"/>
<dbReference type="EMBL" id="U26666">
    <property type="protein sequence ID" value="AAC46992.1"/>
    <property type="molecule type" value="mRNA"/>
</dbReference>
<dbReference type="SMR" id="Q26695"/>
<dbReference type="GO" id="GO:0005829">
    <property type="term" value="C:cytosol"/>
    <property type="evidence" value="ECO:0007669"/>
    <property type="project" value="TreeGrafter"/>
</dbReference>
<dbReference type="GO" id="GO:0008379">
    <property type="term" value="F:thioredoxin peroxidase activity"/>
    <property type="evidence" value="ECO:0007669"/>
    <property type="project" value="TreeGrafter"/>
</dbReference>
<dbReference type="GO" id="GO:0045454">
    <property type="term" value="P:cell redox homeostasis"/>
    <property type="evidence" value="ECO:0007669"/>
    <property type="project" value="TreeGrafter"/>
</dbReference>
<dbReference type="GO" id="GO:0033554">
    <property type="term" value="P:cellular response to stress"/>
    <property type="evidence" value="ECO:0007669"/>
    <property type="project" value="TreeGrafter"/>
</dbReference>
<dbReference type="GO" id="GO:0042744">
    <property type="term" value="P:hydrogen peroxide catabolic process"/>
    <property type="evidence" value="ECO:0007669"/>
    <property type="project" value="TreeGrafter"/>
</dbReference>
<dbReference type="GO" id="GO:0006979">
    <property type="term" value="P:response to oxidative stress"/>
    <property type="evidence" value="ECO:0007669"/>
    <property type="project" value="TreeGrafter"/>
</dbReference>
<dbReference type="CDD" id="cd03015">
    <property type="entry name" value="PRX_Typ2cys"/>
    <property type="match status" value="1"/>
</dbReference>
<dbReference type="FunFam" id="3.40.30.10:FF:000003">
    <property type="entry name" value="Peroxiredoxin 1"/>
    <property type="match status" value="1"/>
</dbReference>
<dbReference type="Gene3D" id="3.40.30.10">
    <property type="entry name" value="Glutaredoxin"/>
    <property type="match status" value="1"/>
</dbReference>
<dbReference type="InterPro" id="IPR000866">
    <property type="entry name" value="AhpC/TSA"/>
</dbReference>
<dbReference type="InterPro" id="IPR050217">
    <property type="entry name" value="Peroxiredoxin"/>
</dbReference>
<dbReference type="InterPro" id="IPR024706">
    <property type="entry name" value="Peroxiredoxin_AhpC-typ"/>
</dbReference>
<dbReference type="InterPro" id="IPR019479">
    <property type="entry name" value="Peroxiredoxin_C"/>
</dbReference>
<dbReference type="InterPro" id="IPR036249">
    <property type="entry name" value="Thioredoxin-like_sf"/>
</dbReference>
<dbReference type="InterPro" id="IPR013766">
    <property type="entry name" value="Thioredoxin_domain"/>
</dbReference>
<dbReference type="PANTHER" id="PTHR10681:SF171">
    <property type="entry name" value="PEROXIREDOXIN 4"/>
    <property type="match status" value="1"/>
</dbReference>
<dbReference type="PANTHER" id="PTHR10681">
    <property type="entry name" value="THIOREDOXIN PEROXIDASE"/>
    <property type="match status" value="1"/>
</dbReference>
<dbReference type="Pfam" id="PF10417">
    <property type="entry name" value="1-cysPrx_C"/>
    <property type="match status" value="1"/>
</dbReference>
<dbReference type="Pfam" id="PF00578">
    <property type="entry name" value="AhpC-TSA"/>
    <property type="match status" value="1"/>
</dbReference>
<dbReference type="PIRSF" id="PIRSF000239">
    <property type="entry name" value="AHPC"/>
    <property type="match status" value="1"/>
</dbReference>
<dbReference type="SUPFAM" id="SSF52833">
    <property type="entry name" value="Thioredoxin-like"/>
    <property type="match status" value="1"/>
</dbReference>
<dbReference type="PROSITE" id="PS51352">
    <property type="entry name" value="THIOREDOXIN_2"/>
    <property type="match status" value="1"/>
</dbReference>
<sequence length="199" mass="22425">MSCGDAKLNHPAPHFNEVALMPNGTFKKVDLASYRGKWVVLFFYPLDFTFVCPTEICQFSDRVKEFNDVDCEVIACSMDSEFSHLAWTNVERKKGGLGTMNIPILADKTKSIMKAYGVLKEEDGVAYRGLFIIDPQQNLRQITINDLPVGRNVDETLRLVKAFQFVEKHGEVCPANWKPGSKTMKADPNGSQDYFSSMN</sequence>
<name>TDX_TRYBR</name>
<keyword id="KW-0049">Antioxidant</keyword>
<keyword id="KW-1015">Disulfide bond</keyword>
<keyword id="KW-0560">Oxidoreductase</keyword>
<keyword id="KW-0575">Peroxidase</keyword>
<keyword id="KW-0676">Redox-active center</keyword>
<organism>
    <name type="scientific">Trypanosoma brucei rhodesiense</name>
    <dbReference type="NCBI Taxonomy" id="31286"/>
    <lineage>
        <taxon>Eukaryota</taxon>
        <taxon>Discoba</taxon>
        <taxon>Euglenozoa</taxon>
        <taxon>Kinetoplastea</taxon>
        <taxon>Metakinetoplastina</taxon>
        <taxon>Trypanosomatida</taxon>
        <taxon>Trypanosomatidae</taxon>
        <taxon>Trypanosoma</taxon>
    </lineage>
</organism>
<accession>Q26695</accession>
<comment type="function">
    <text evidence="1">Thiol-specific peroxidase that catalyzes the reduction of hydrogen peroxide and organic hydroperoxides to water and alcohols, respectively. Plays a role in cell protection against oxidative stress by detoxifying peroxides and as sensor of hydrogen peroxide-mediated signaling events.</text>
</comment>
<comment type="catalytic activity">
    <reaction evidence="1">
        <text>a hydroperoxide + [thioredoxin]-dithiol = an alcohol + [thioredoxin]-disulfide + H2O</text>
        <dbReference type="Rhea" id="RHEA:62620"/>
        <dbReference type="Rhea" id="RHEA-COMP:10698"/>
        <dbReference type="Rhea" id="RHEA-COMP:10700"/>
        <dbReference type="ChEBI" id="CHEBI:15377"/>
        <dbReference type="ChEBI" id="CHEBI:29950"/>
        <dbReference type="ChEBI" id="CHEBI:30879"/>
        <dbReference type="ChEBI" id="CHEBI:35924"/>
        <dbReference type="ChEBI" id="CHEBI:50058"/>
        <dbReference type="EC" id="1.11.1.24"/>
    </reaction>
</comment>
<comment type="subunit">
    <text evidence="1">Homodimer; disulfide-linked, upon oxidation.</text>
</comment>
<comment type="miscellaneous">
    <text evidence="1">The active site is a conserved redox-active cysteine residue, the peroxidatic cysteine (C(P)), which makes the nucleophilic attack on the peroxide substrate. The peroxide oxidizes the C(P)-SH to cysteine sulfenic acid (C(P)-SOH), which then reacts with another cysteine residue, the resolving cysteine (C(R)), to form a disulfide bridge. The disulfide is subsequently reduced by an appropriate electron donor to complete the catalytic cycle. In this typical 2-Cys peroxiredoxin, C(R) is provided by the other dimeric subunit to form an intersubunit disulfide. The disulfide is subsequently reduced by thioredoxin.</text>
</comment>
<comment type="similarity">
    <text evidence="4">Belongs to the peroxiredoxin family. AhpC/Prx1 subfamily.</text>
</comment>
<feature type="chain" id="PRO_0000135093" description="Thioredoxin peroxidase">
    <location>
        <begin position="1"/>
        <end position="199"/>
    </location>
</feature>
<feature type="domain" description="Thioredoxin" evidence="2">
    <location>
        <begin position="6"/>
        <end position="165"/>
    </location>
</feature>
<feature type="region of interest" description="Disordered" evidence="3">
    <location>
        <begin position="179"/>
        <end position="199"/>
    </location>
</feature>
<feature type="compositionally biased region" description="Polar residues" evidence="3">
    <location>
        <begin position="189"/>
        <end position="199"/>
    </location>
</feature>
<feature type="active site" description="Cysteine sulfenic acid (-SOH) intermediate" evidence="1">
    <location>
        <position position="52"/>
    </location>
</feature>
<feature type="disulfide bond" description="Interchain (with C-173); in linked form" evidence="1">
    <location>
        <position position="52"/>
    </location>
</feature>
<feature type="disulfide bond" description="Interchain (with C-52); in linked form" evidence="1">
    <location>
        <position position="173"/>
    </location>
</feature>